<gene>
    <name evidence="1" type="primary">ybeY</name>
    <name type="ordered locus">Atu0358</name>
    <name type="ORF">AGR_C_626</name>
</gene>
<dbReference type="EC" id="3.1.-.-" evidence="1"/>
<dbReference type="EMBL" id="AE007869">
    <property type="protein sequence ID" value="AAK86175.2"/>
    <property type="molecule type" value="Genomic_DNA"/>
</dbReference>
<dbReference type="PIR" id="AF2620">
    <property type="entry name" value="AF2620"/>
</dbReference>
<dbReference type="PIR" id="F97402">
    <property type="entry name" value="F97402"/>
</dbReference>
<dbReference type="RefSeq" id="NP_353390.2">
    <property type="nucleotide sequence ID" value="NC_003062.2"/>
</dbReference>
<dbReference type="RefSeq" id="WP_010970840.1">
    <property type="nucleotide sequence ID" value="NC_003062.2"/>
</dbReference>
<dbReference type="SMR" id="Q8UID9"/>
<dbReference type="STRING" id="176299.Atu0358"/>
<dbReference type="EnsemblBacteria" id="AAK86175">
    <property type="protein sequence ID" value="AAK86175"/>
    <property type="gene ID" value="Atu0358"/>
</dbReference>
<dbReference type="GeneID" id="1132396"/>
<dbReference type="KEGG" id="atu:Atu0358"/>
<dbReference type="PATRIC" id="fig|176299.10.peg.349"/>
<dbReference type="eggNOG" id="COG0319">
    <property type="taxonomic scope" value="Bacteria"/>
</dbReference>
<dbReference type="HOGENOM" id="CLU_106710_0_0_5"/>
<dbReference type="OrthoDB" id="9807740at2"/>
<dbReference type="PhylomeDB" id="Q8UID9"/>
<dbReference type="BioCyc" id="AGRO:ATU0358-MONOMER"/>
<dbReference type="PHI-base" id="PHI:10270"/>
<dbReference type="Proteomes" id="UP000000813">
    <property type="component" value="Chromosome circular"/>
</dbReference>
<dbReference type="GO" id="GO:0005737">
    <property type="term" value="C:cytoplasm"/>
    <property type="evidence" value="ECO:0007669"/>
    <property type="project" value="UniProtKB-SubCell"/>
</dbReference>
<dbReference type="GO" id="GO:0004222">
    <property type="term" value="F:metalloendopeptidase activity"/>
    <property type="evidence" value="ECO:0007669"/>
    <property type="project" value="InterPro"/>
</dbReference>
<dbReference type="GO" id="GO:0004521">
    <property type="term" value="F:RNA endonuclease activity"/>
    <property type="evidence" value="ECO:0007669"/>
    <property type="project" value="UniProtKB-UniRule"/>
</dbReference>
<dbReference type="GO" id="GO:0008270">
    <property type="term" value="F:zinc ion binding"/>
    <property type="evidence" value="ECO:0007669"/>
    <property type="project" value="UniProtKB-UniRule"/>
</dbReference>
<dbReference type="GO" id="GO:0006364">
    <property type="term" value="P:rRNA processing"/>
    <property type="evidence" value="ECO:0007669"/>
    <property type="project" value="UniProtKB-UniRule"/>
</dbReference>
<dbReference type="Gene3D" id="3.40.390.30">
    <property type="entry name" value="Metalloproteases ('zincins'), catalytic domain"/>
    <property type="match status" value="1"/>
</dbReference>
<dbReference type="HAMAP" id="MF_00009">
    <property type="entry name" value="Endoribonucl_YbeY"/>
    <property type="match status" value="1"/>
</dbReference>
<dbReference type="InterPro" id="IPR023091">
    <property type="entry name" value="MetalPrtase_cat_dom_sf_prd"/>
</dbReference>
<dbReference type="InterPro" id="IPR002036">
    <property type="entry name" value="YbeY"/>
</dbReference>
<dbReference type="InterPro" id="IPR020549">
    <property type="entry name" value="YbeY_CS"/>
</dbReference>
<dbReference type="NCBIfam" id="TIGR00043">
    <property type="entry name" value="rRNA maturation RNase YbeY"/>
    <property type="match status" value="1"/>
</dbReference>
<dbReference type="PANTHER" id="PTHR46986">
    <property type="entry name" value="ENDORIBONUCLEASE YBEY, CHLOROPLASTIC"/>
    <property type="match status" value="1"/>
</dbReference>
<dbReference type="PANTHER" id="PTHR46986:SF1">
    <property type="entry name" value="ENDORIBONUCLEASE YBEY, CHLOROPLASTIC"/>
    <property type="match status" value="1"/>
</dbReference>
<dbReference type="Pfam" id="PF02130">
    <property type="entry name" value="YbeY"/>
    <property type="match status" value="1"/>
</dbReference>
<dbReference type="SUPFAM" id="SSF55486">
    <property type="entry name" value="Metalloproteases ('zincins'), catalytic domain"/>
    <property type="match status" value="1"/>
</dbReference>
<dbReference type="PROSITE" id="PS01306">
    <property type="entry name" value="UPF0054"/>
    <property type="match status" value="1"/>
</dbReference>
<keyword id="KW-0963">Cytoplasm</keyword>
<keyword id="KW-0255">Endonuclease</keyword>
<keyword id="KW-0378">Hydrolase</keyword>
<keyword id="KW-0479">Metal-binding</keyword>
<keyword id="KW-0540">Nuclease</keyword>
<keyword id="KW-1185">Reference proteome</keyword>
<keyword id="KW-0690">Ribosome biogenesis</keyword>
<keyword id="KW-0698">rRNA processing</keyword>
<keyword id="KW-0862">Zinc</keyword>
<organism>
    <name type="scientific">Agrobacterium fabrum (strain C58 / ATCC 33970)</name>
    <name type="common">Agrobacterium tumefaciens (strain C58)</name>
    <dbReference type="NCBI Taxonomy" id="176299"/>
    <lineage>
        <taxon>Bacteria</taxon>
        <taxon>Pseudomonadati</taxon>
        <taxon>Pseudomonadota</taxon>
        <taxon>Alphaproteobacteria</taxon>
        <taxon>Hyphomicrobiales</taxon>
        <taxon>Rhizobiaceae</taxon>
        <taxon>Rhizobium/Agrobacterium group</taxon>
        <taxon>Agrobacterium</taxon>
        <taxon>Agrobacterium tumefaciens complex</taxon>
    </lineage>
</organism>
<feature type="chain" id="PRO_0000102397" description="Endoribonuclease YbeY">
    <location>
        <begin position="1"/>
        <end position="168"/>
    </location>
</feature>
<feature type="binding site" evidence="1">
    <location>
        <position position="126"/>
    </location>
    <ligand>
        <name>Zn(2+)</name>
        <dbReference type="ChEBI" id="CHEBI:29105"/>
        <note>catalytic</note>
    </ligand>
</feature>
<feature type="binding site" evidence="1">
    <location>
        <position position="130"/>
    </location>
    <ligand>
        <name>Zn(2+)</name>
        <dbReference type="ChEBI" id="CHEBI:29105"/>
        <note>catalytic</note>
    </ligand>
</feature>
<feature type="binding site" evidence="1">
    <location>
        <position position="136"/>
    </location>
    <ligand>
        <name>Zn(2+)</name>
        <dbReference type="ChEBI" id="CHEBI:29105"/>
        <note>catalytic</note>
    </ligand>
</feature>
<comment type="function">
    <text evidence="1">Single strand-specific metallo-endoribonuclease involved in late-stage 70S ribosome quality control and in maturation of the 3' terminus of the 16S rRNA.</text>
</comment>
<comment type="cofactor">
    <cofactor evidence="1">
        <name>Zn(2+)</name>
        <dbReference type="ChEBI" id="CHEBI:29105"/>
    </cofactor>
    <text evidence="1">Binds 1 zinc ion.</text>
</comment>
<comment type="subcellular location">
    <subcellularLocation>
        <location evidence="1">Cytoplasm</location>
    </subcellularLocation>
</comment>
<comment type="similarity">
    <text evidence="1">Belongs to the endoribonuclease YbeY family.</text>
</comment>
<sequence>MAALDIQISVEAEGWSSEENLAAFATKVLNAAVDFLKREEEQPFPKMPVELSLVFTDDENIREINAEWRDKDKATNVLSFPAFPLEPGGMPGPMLGDIVIARETVEREALELDKSFEDHLTHLLVHGFLHLFGYDHMDEEEAEEMESLETRILAVLGLSDPYAGQEPL</sequence>
<reference key="1">
    <citation type="journal article" date="2001" name="Science">
        <title>The genome of the natural genetic engineer Agrobacterium tumefaciens C58.</title>
        <authorList>
            <person name="Wood D.W."/>
            <person name="Setubal J.C."/>
            <person name="Kaul R."/>
            <person name="Monks D.E."/>
            <person name="Kitajima J.P."/>
            <person name="Okura V.K."/>
            <person name="Zhou Y."/>
            <person name="Chen L."/>
            <person name="Wood G.E."/>
            <person name="Almeida N.F. Jr."/>
            <person name="Woo L."/>
            <person name="Chen Y."/>
            <person name="Paulsen I.T."/>
            <person name="Eisen J.A."/>
            <person name="Karp P.D."/>
            <person name="Bovee D. Sr."/>
            <person name="Chapman P."/>
            <person name="Clendenning J."/>
            <person name="Deatherage G."/>
            <person name="Gillet W."/>
            <person name="Grant C."/>
            <person name="Kutyavin T."/>
            <person name="Levy R."/>
            <person name="Li M.-J."/>
            <person name="McClelland E."/>
            <person name="Palmieri A."/>
            <person name="Raymond C."/>
            <person name="Rouse G."/>
            <person name="Saenphimmachak C."/>
            <person name="Wu Z."/>
            <person name="Romero P."/>
            <person name="Gordon D."/>
            <person name="Zhang S."/>
            <person name="Yoo H."/>
            <person name="Tao Y."/>
            <person name="Biddle P."/>
            <person name="Jung M."/>
            <person name="Krespan W."/>
            <person name="Perry M."/>
            <person name="Gordon-Kamm B."/>
            <person name="Liao L."/>
            <person name="Kim S."/>
            <person name="Hendrick C."/>
            <person name="Zhao Z.-Y."/>
            <person name="Dolan M."/>
            <person name="Chumley F."/>
            <person name="Tingey S.V."/>
            <person name="Tomb J.-F."/>
            <person name="Gordon M.P."/>
            <person name="Olson M.V."/>
            <person name="Nester E.W."/>
        </authorList>
    </citation>
    <scope>NUCLEOTIDE SEQUENCE [LARGE SCALE GENOMIC DNA]</scope>
    <source>
        <strain>C58 / ATCC 33970</strain>
    </source>
</reference>
<reference key="2">
    <citation type="journal article" date="2001" name="Science">
        <title>Genome sequence of the plant pathogen and biotechnology agent Agrobacterium tumefaciens C58.</title>
        <authorList>
            <person name="Goodner B."/>
            <person name="Hinkle G."/>
            <person name="Gattung S."/>
            <person name="Miller N."/>
            <person name="Blanchard M."/>
            <person name="Qurollo B."/>
            <person name="Goldman B.S."/>
            <person name="Cao Y."/>
            <person name="Askenazi M."/>
            <person name="Halling C."/>
            <person name="Mullin L."/>
            <person name="Houmiel K."/>
            <person name="Gordon J."/>
            <person name="Vaudin M."/>
            <person name="Iartchouk O."/>
            <person name="Epp A."/>
            <person name="Liu F."/>
            <person name="Wollam C."/>
            <person name="Allinger M."/>
            <person name="Doughty D."/>
            <person name="Scott C."/>
            <person name="Lappas C."/>
            <person name="Markelz B."/>
            <person name="Flanagan C."/>
            <person name="Crowell C."/>
            <person name="Gurson J."/>
            <person name="Lomo C."/>
            <person name="Sear C."/>
            <person name="Strub G."/>
            <person name="Cielo C."/>
            <person name="Slater S."/>
        </authorList>
    </citation>
    <scope>NUCLEOTIDE SEQUENCE [LARGE SCALE GENOMIC DNA]</scope>
    <source>
        <strain>C58 / ATCC 33970</strain>
    </source>
</reference>
<proteinExistence type="inferred from homology"/>
<accession>Q8UID9</accession>
<name>YBEY_AGRFC</name>
<evidence type="ECO:0000255" key="1">
    <source>
        <dbReference type="HAMAP-Rule" id="MF_00009"/>
    </source>
</evidence>
<protein>
    <recommendedName>
        <fullName evidence="1">Endoribonuclease YbeY</fullName>
        <ecNumber evidence="1">3.1.-.-</ecNumber>
    </recommendedName>
</protein>